<sequence length="215" mass="23060">MKTVLITAFEPFEGEAINPSWEAVKVLHQREVGGARVVACRLSCVFDLSLEELYRAIAEWQPEVVIAVGQAGGRTDISVERVAININDARIADNRGNQPIDTPIVEKGPAAYFSTLPVKALVQALRVAGIPASVSQTAGTFVCNHVMYGLLHQLHQQGDVVRGGFVHIPYSPEQAARHPGEPSMPTPLVTAALEVMIKQSLAQQVDVAVTGGALH</sequence>
<feature type="chain" id="PRO_1000206022" description="Pyrrolidone-carboxylate peptidase">
    <location>
        <begin position="1"/>
        <end position="215"/>
    </location>
</feature>
<feature type="active site" evidence="1">
    <location>
        <position position="80"/>
    </location>
</feature>
<feature type="active site" evidence="1">
    <location>
        <position position="143"/>
    </location>
</feature>
<feature type="active site" evidence="1">
    <location>
        <position position="167"/>
    </location>
</feature>
<protein>
    <recommendedName>
        <fullName evidence="1">Pyrrolidone-carboxylate peptidase</fullName>
        <ecNumber evidence="1">3.4.19.3</ecNumber>
    </recommendedName>
    <alternativeName>
        <fullName evidence="1">5-oxoprolyl-peptidase</fullName>
    </alternativeName>
    <alternativeName>
        <fullName evidence="1">Pyroglutamyl-peptidase I</fullName>
        <shortName evidence="1">PGP-I</shortName>
        <shortName evidence="1">Pyrase</shortName>
    </alternativeName>
</protein>
<keyword id="KW-0963">Cytoplasm</keyword>
<keyword id="KW-0378">Hydrolase</keyword>
<keyword id="KW-0645">Protease</keyword>
<keyword id="KW-0788">Thiol protease</keyword>
<accession>C6DCC7</accession>
<comment type="function">
    <text evidence="1">Removes 5-oxoproline from various penultimate amino acid residues except L-proline.</text>
</comment>
<comment type="catalytic activity">
    <reaction evidence="1">
        <text>Release of an N-terminal pyroglutamyl group from a polypeptide, the second amino acid generally not being Pro.</text>
        <dbReference type="EC" id="3.4.19.3"/>
    </reaction>
</comment>
<comment type="subunit">
    <text evidence="1">Homotetramer.</text>
</comment>
<comment type="subcellular location">
    <subcellularLocation>
        <location evidence="1">Cytoplasm</location>
    </subcellularLocation>
</comment>
<comment type="similarity">
    <text evidence="1">Belongs to the peptidase C15 family.</text>
</comment>
<proteinExistence type="inferred from homology"/>
<dbReference type="EC" id="3.4.19.3" evidence="1"/>
<dbReference type="EMBL" id="CP001657">
    <property type="protein sequence ID" value="ACT12277.1"/>
    <property type="molecule type" value="Genomic_DNA"/>
</dbReference>
<dbReference type="RefSeq" id="WP_015839509.1">
    <property type="nucleotide sequence ID" value="NC_012917.1"/>
</dbReference>
<dbReference type="SMR" id="C6DCC7"/>
<dbReference type="STRING" id="561230.PC1_1229"/>
<dbReference type="MEROPS" id="C15.001"/>
<dbReference type="GeneID" id="67794999"/>
<dbReference type="KEGG" id="pct:PC1_1229"/>
<dbReference type="eggNOG" id="COG2039">
    <property type="taxonomic scope" value="Bacteria"/>
</dbReference>
<dbReference type="HOGENOM" id="CLU_043960_4_0_6"/>
<dbReference type="OrthoDB" id="9779738at2"/>
<dbReference type="Proteomes" id="UP000002736">
    <property type="component" value="Chromosome"/>
</dbReference>
<dbReference type="GO" id="GO:0005829">
    <property type="term" value="C:cytosol"/>
    <property type="evidence" value="ECO:0007669"/>
    <property type="project" value="InterPro"/>
</dbReference>
<dbReference type="GO" id="GO:0016920">
    <property type="term" value="F:pyroglutamyl-peptidase activity"/>
    <property type="evidence" value="ECO:0007669"/>
    <property type="project" value="UniProtKB-UniRule"/>
</dbReference>
<dbReference type="GO" id="GO:0006508">
    <property type="term" value="P:proteolysis"/>
    <property type="evidence" value="ECO:0007669"/>
    <property type="project" value="UniProtKB-KW"/>
</dbReference>
<dbReference type="CDD" id="cd00501">
    <property type="entry name" value="Peptidase_C15"/>
    <property type="match status" value="1"/>
</dbReference>
<dbReference type="FunFam" id="3.40.630.20:FF:000001">
    <property type="entry name" value="Pyrrolidone-carboxylate peptidase"/>
    <property type="match status" value="1"/>
</dbReference>
<dbReference type="Gene3D" id="3.40.630.20">
    <property type="entry name" value="Peptidase C15, pyroglutamyl peptidase I-like"/>
    <property type="match status" value="1"/>
</dbReference>
<dbReference type="HAMAP" id="MF_00417">
    <property type="entry name" value="Pyrrolid_peptidase"/>
    <property type="match status" value="1"/>
</dbReference>
<dbReference type="InterPro" id="IPR000816">
    <property type="entry name" value="Peptidase_C15"/>
</dbReference>
<dbReference type="InterPro" id="IPR016125">
    <property type="entry name" value="Peptidase_C15-like"/>
</dbReference>
<dbReference type="InterPro" id="IPR036440">
    <property type="entry name" value="Peptidase_C15-like_sf"/>
</dbReference>
<dbReference type="InterPro" id="IPR029762">
    <property type="entry name" value="PGP-I_bact-type"/>
</dbReference>
<dbReference type="InterPro" id="IPR033694">
    <property type="entry name" value="PGPEP1_Cys_AS"/>
</dbReference>
<dbReference type="InterPro" id="IPR033693">
    <property type="entry name" value="PGPEP1_Glu_AS"/>
</dbReference>
<dbReference type="NCBIfam" id="NF009676">
    <property type="entry name" value="PRK13197.1"/>
    <property type="match status" value="1"/>
</dbReference>
<dbReference type="NCBIfam" id="TIGR00504">
    <property type="entry name" value="pyro_pdase"/>
    <property type="match status" value="1"/>
</dbReference>
<dbReference type="PANTHER" id="PTHR23402">
    <property type="entry name" value="PROTEASE FAMILY C15 PYROGLUTAMYL-PEPTIDASE I-RELATED"/>
    <property type="match status" value="1"/>
</dbReference>
<dbReference type="PANTHER" id="PTHR23402:SF1">
    <property type="entry name" value="PYROGLUTAMYL-PEPTIDASE I"/>
    <property type="match status" value="1"/>
</dbReference>
<dbReference type="Pfam" id="PF01470">
    <property type="entry name" value="Peptidase_C15"/>
    <property type="match status" value="1"/>
</dbReference>
<dbReference type="PIRSF" id="PIRSF015592">
    <property type="entry name" value="Prld-crbxl_pptds"/>
    <property type="match status" value="1"/>
</dbReference>
<dbReference type="PRINTS" id="PR00706">
    <property type="entry name" value="PYROGLUPTASE"/>
</dbReference>
<dbReference type="SUPFAM" id="SSF53182">
    <property type="entry name" value="Pyrrolidone carboxyl peptidase (pyroglutamate aminopeptidase)"/>
    <property type="match status" value="1"/>
</dbReference>
<dbReference type="PROSITE" id="PS01334">
    <property type="entry name" value="PYRASE_CYS"/>
    <property type="match status" value="1"/>
</dbReference>
<dbReference type="PROSITE" id="PS01333">
    <property type="entry name" value="PYRASE_GLU"/>
    <property type="match status" value="1"/>
</dbReference>
<evidence type="ECO:0000255" key="1">
    <source>
        <dbReference type="HAMAP-Rule" id="MF_00417"/>
    </source>
</evidence>
<gene>
    <name evidence="1" type="primary">pcp</name>
    <name type="ordered locus">PC1_1229</name>
</gene>
<organism>
    <name type="scientific">Pectobacterium carotovorum subsp. carotovorum (strain PC1)</name>
    <dbReference type="NCBI Taxonomy" id="561230"/>
    <lineage>
        <taxon>Bacteria</taxon>
        <taxon>Pseudomonadati</taxon>
        <taxon>Pseudomonadota</taxon>
        <taxon>Gammaproteobacteria</taxon>
        <taxon>Enterobacterales</taxon>
        <taxon>Pectobacteriaceae</taxon>
        <taxon>Pectobacterium</taxon>
    </lineage>
</organism>
<name>PCP_PECCP</name>
<reference key="1">
    <citation type="submission" date="2009-07" db="EMBL/GenBank/DDBJ databases">
        <title>Complete sequence of Pectobacterium carotovorum subsp. carotovorum PC1.</title>
        <authorList>
            <consortium name="US DOE Joint Genome Institute"/>
            <person name="Lucas S."/>
            <person name="Copeland A."/>
            <person name="Lapidus A."/>
            <person name="Glavina del Rio T."/>
            <person name="Tice H."/>
            <person name="Bruce D."/>
            <person name="Goodwin L."/>
            <person name="Pitluck S."/>
            <person name="Munk A.C."/>
            <person name="Brettin T."/>
            <person name="Detter J.C."/>
            <person name="Han C."/>
            <person name="Tapia R."/>
            <person name="Larimer F."/>
            <person name="Land M."/>
            <person name="Hauser L."/>
            <person name="Kyrpides N."/>
            <person name="Mikhailova N."/>
            <person name="Balakrishnan V."/>
            <person name="Glasner J."/>
            <person name="Perna N.T."/>
        </authorList>
    </citation>
    <scope>NUCLEOTIDE SEQUENCE [LARGE SCALE GENOMIC DNA]</scope>
    <source>
        <strain>PC1</strain>
    </source>
</reference>